<reference key="1">
    <citation type="journal article" date="2011" name="Stand. Genomic Sci.">
        <title>Complete genome sequence of Parvibaculum lavamentivorans type strain (DS-1(T)).</title>
        <authorList>
            <person name="Schleheck D."/>
            <person name="Weiss M."/>
            <person name="Pitluck S."/>
            <person name="Bruce D."/>
            <person name="Land M.L."/>
            <person name="Han S."/>
            <person name="Saunders E."/>
            <person name="Tapia R."/>
            <person name="Detter C."/>
            <person name="Brettin T."/>
            <person name="Han J."/>
            <person name="Woyke T."/>
            <person name="Goodwin L."/>
            <person name="Pennacchio L."/>
            <person name="Nolan M."/>
            <person name="Cook A.M."/>
            <person name="Kjelleberg S."/>
            <person name="Thomas T."/>
        </authorList>
    </citation>
    <scope>NUCLEOTIDE SEQUENCE [LARGE SCALE GENOMIC DNA]</scope>
    <source>
        <strain>DS-1 / DSM 13023 / NCIMB 13966</strain>
    </source>
</reference>
<protein>
    <recommendedName>
        <fullName evidence="1">Adenine phosphoribosyltransferase</fullName>
        <shortName evidence="1">APRT</shortName>
        <ecNumber evidence="1">2.4.2.7</ecNumber>
    </recommendedName>
</protein>
<gene>
    <name evidence="1" type="primary">apt</name>
    <name type="ordered locus">Plav_2246</name>
</gene>
<dbReference type="EC" id="2.4.2.7" evidence="1"/>
<dbReference type="EMBL" id="CP000774">
    <property type="protein sequence ID" value="ABS63860.1"/>
    <property type="molecule type" value="Genomic_DNA"/>
</dbReference>
<dbReference type="RefSeq" id="WP_012111165.1">
    <property type="nucleotide sequence ID" value="NC_009719.1"/>
</dbReference>
<dbReference type="SMR" id="A7HVC7"/>
<dbReference type="STRING" id="402881.Plav_2246"/>
<dbReference type="KEGG" id="pla:Plav_2246"/>
<dbReference type="eggNOG" id="COG0503">
    <property type="taxonomic scope" value="Bacteria"/>
</dbReference>
<dbReference type="HOGENOM" id="CLU_063339_3_0_5"/>
<dbReference type="OrthoDB" id="9803963at2"/>
<dbReference type="UniPathway" id="UPA00588">
    <property type="reaction ID" value="UER00646"/>
</dbReference>
<dbReference type="Proteomes" id="UP000006377">
    <property type="component" value="Chromosome"/>
</dbReference>
<dbReference type="GO" id="GO:0005737">
    <property type="term" value="C:cytoplasm"/>
    <property type="evidence" value="ECO:0007669"/>
    <property type="project" value="UniProtKB-SubCell"/>
</dbReference>
<dbReference type="GO" id="GO:0002055">
    <property type="term" value="F:adenine binding"/>
    <property type="evidence" value="ECO:0007669"/>
    <property type="project" value="TreeGrafter"/>
</dbReference>
<dbReference type="GO" id="GO:0003999">
    <property type="term" value="F:adenine phosphoribosyltransferase activity"/>
    <property type="evidence" value="ECO:0007669"/>
    <property type="project" value="UniProtKB-UniRule"/>
</dbReference>
<dbReference type="GO" id="GO:0016208">
    <property type="term" value="F:AMP binding"/>
    <property type="evidence" value="ECO:0007669"/>
    <property type="project" value="TreeGrafter"/>
</dbReference>
<dbReference type="GO" id="GO:0006168">
    <property type="term" value="P:adenine salvage"/>
    <property type="evidence" value="ECO:0007669"/>
    <property type="project" value="InterPro"/>
</dbReference>
<dbReference type="GO" id="GO:0044209">
    <property type="term" value="P:AMP salvage"/>
    <property type="evidence" value="ECO:0007669"/>
    <property type="project" value="UniProtKB-UniRule"/>
</dbReference>
<dbReference type="GO" id="GO:0006166">
    <property type="term" value="P:purine ribonucleoside salvage"/>
    <property type="evidence" value="ECO:0007669"/>
    <property type="project" value="UniProtKB-KW"/>
</dbReference>
<dbReference type="CDD" id="cd06223">
    <property type="entry name" value="PRTases_typeI"/>
    <property type="match status" value="1"/>
</dbReference>
<dbReference type="FunFam" id="3.40.50.2020:FF:000021">
    <property type="entry name" value="Adenine phosphoribosyltransferase"/>
    <property type="match status" value="1"/>
</dbReference>
<dbReference type="Gene3D" id="3.40.50.2020">
    <property type="match status" value="1"/>
</dbReference>
<dbReference type="HAMAP" id="MF_00004">
    <property type="entry name" value="Aden_phosphoribosyltr"/>
    <property type="match status" value="1"/>
</dbReference>
<dbReference type="InterPro" id="IPR005764">
    <property type="entry name" value="Ade_phspho_trans"/>
</dbReference>
<dbReference type="InterPro" id="IPR000836">
    <property type="entry name" value="PRibTrfase_dom"/>
</dbReference>
<dbReference type="InterPro" id="IPR029057">
    <property type="entry name" value="PRTase-like"/>
</dbReference>
<dbReference type="InterPro" id="IPR050054">
    <property type="entry name" value="UPRTase/APRTase"/>
</dbReference>
<dbReference type="NCBIfam" id="TIGR01090">
    <property type="entry name" value="apt"/>
    <property type="match status" value="1"/>
</dbReference>
<dbReference type="NCBIfam" id="NF002634">
    <property type="entry name" value="PRK02304.1-3"/>
    <property type="match status" value="1"/>
</dbReference>
<dbReference type="NCBIfam" id="NF002636">
    <property type="entry name" value="PRK02304.1-5"/>
    <property type="match status" value="1"/>
</dbReference>
<dbReference type="PANTHER" id="PTHR32315">
    <property type="entry name" value="ADENINE PHOSPHORIBOSYLTRANSFERASE"/>
    <property type="match status" value="1"/>
</dbReference>
<dbReference type="PANTHER" id="PTHR32315:SF3">
    <property type="entry name" value="ADENINE PHOSPHORIBOSYLTRANSFERASE"/>
    <property type="match status" value="1"/>
</dbReference>
<dbReference type="Pfam" id="PF00156">
    <property type="entry name" value="Pribosyltran"/>
    <property type="match status" value="1"/>
</dbReference>
<dbReference type="SUPFAM" id="SSF53271">
    <property type="entry name" value="PRTase-like"/>
    <property type="match status" value="1"/>
</dbReference>
<dbReference type="PROSITE" id="PS00103">
    <property type="entry name" value="PUR_PYR_PR_TRANSFER"/>
    <property type="match status" value="1"/>
</dbReference>
<feature type="chain" id="PRO_0000321380" description="Adenine phosphoribosyltransferase">
    <location>
        <begin position="1"/>
        <end position="175"/>
    </location>
</feature>
<evidence type="ECO:0000255" key="1">
    <source>
        <dbReference type="HAMAP-Rule" id="MF_00004"/>
    </source>
</evidence>
<accession>A7HVC7</accession>
<proteinExistence type="inferred from homology"/>
<sequence length="175" mass="18743">MDVKDFIRTIPDYPKPGILFRDITTLLSDPEGFRGAVDALVSLHKGAKFDVVAGIEARGFILGGAVAHQLGLGFIPVRKKGKLPFTTIGQEYDLEYGTDMVEIHTDAVKPDQRVLLIDDLIATGGTAEAAVKLIARAGGNVLASSFVIELPELGGRARLEALDIEVLSLCSFEGH</sequence>
<name>APT_PARL1</name>
<organism>
    <name type="scientific">Parvibaculum lavamentivorans (strain DS-1 / DSM 13023 / NCIMB 13966)</name>
    <dbReference type="NCBI Taxonomy" id="402881"/>
    <lineage>
        <taxon>Bacteria</taxon>
        <taxon>Pseudomonadati</taxon>
        <taxon>Pseudomonadota</taxon>
        <taxon>Alphaproteobacteria</taxon>
        <taxon>Hyphomicrobiales</taxon>
        <taxon>Parvibaculaceae</taxon>
        <taxon>Parvibaculum</taxon>
    </lineage>
</organism>
<keyword id="KW-0963">Cytoplasm</keyword>
<keyword id="KW-0328">Glycosyltransferase</keyword>
<keyword id="KW-0660">Purine salvage</keyword>
<keyword id="KW-1185">Reference proteome</keyword>
<keyword id="KW-0808">Transferase</keyword>
<comment type="function">
    <text evidence="1">Catalyzes a salvage reaction resulting in the formation of AMP, that is energically less costly than de novo synthesis.</text>
</comment>
<comment type="catalytic activity">
    <reaction evidence="1">
        <text>AMP + diphosphate = 5-phospho-alpha-D-ribose 1-diphosphate + adenine</text>
        <dbReference type="Rhea" id="RHEA:16609"/>
        <dbReference type="ChEBI" id="CHEBI:16708"/>
        <dbReference type="ChEBI" id="CHEBI:33019"/>
        <dbReference type="ChEBI" id="CHEBI:58017"/>
        <dbReference type="ChEBI" id="CHEBI:456215"/>
        <dbReference type="EC" id="2.4.2.7"/>
    </reaction>
</comment>
<comment type="pathway">
    <text evidence="1">Purine metabolism; AMP biosynthesis via salvage pathway; AMP from adenine: step 1/1.</text>
</comment>
<comment type="subunit">
    <text evidence="1">Homodimer.</text>
</comment>
<comment type="subcellular location">
    <subcellularLocation>
        <location evidence="1">Cytoplasm</location>
    </subcellularLocation>
</comment>
<comment type="similarity">
    <text evidence="1">Belongs to the purine/pyrimidine phosphoribosyltransferase family.</text>
</comment>